<dbReference type="EC" id="2.1.2.9" evidence="1"/>
<dbReference type="EMBL" id="CU928163">
    <property type="protein sequence ID" value="CAR14909.1"/>
    <property type="molecule type" value="Genomic_DNA"/>
</dbReference>
<dbReference type="RefSeq" id="WP_000004443.1">
    <property type="nucleotide sequence ID" value="NC_011751.1"/>
</dbReference>
<dbReference type="RefSeq" id="YP_002414414.1">
    <property type="nucleotide sequence ID" value="NC_011751.1"/>
</dbReference>
<dbReference type="SMR" id="B7NDQ9"/>
<dbReference type="STRING" id="585056.ECUMN_3761"/>
<dbReference type="KEGG" id="eum:ECUMN_3761"/>
<dbReference type="PATRIC" id="fig|585056.7.peg.3936"/>
<dbReference type="HOGENOM" id="CLU_033347_1_2_6"/>
<dbReference type="Proteomes" id="UP000007097">
    <property type="component" value="Chromosome"/>
</dbReference>
<dbReference type="GO" id="GO:0005829">
    <property type="term" value="C:cytosol"/>
    <property type="evidence" value="ECO:0007669"/>
    <property type="project" value="TreeGrafter"/>
</dbReference>
<dbReference type="GO" id="GO:0004479">
    <property type="term" value="F:methionyl-tRNA formyltransferase activity"/>
    <property type="evidence" value="ECO:0007669"/>
    <property type="project" value="UniProtKB-UniRule"/>
</dbReference>
<dbReference type="CDD" id="cd08646">
    <property type="entry name" value="FMT_core_Met-tRNA-FMT_N"/>
    <property type="match status" value="1"/>
</dbReference>
<dbReference type="CDD" id="cd08704">
    <property type="entry name" value="Met_tRNA_FMT_C"/>
    <property type="match status" value="1"/>
</dbReference>
<dbReference type="FunFam" id="3.10.25.10:FF:000001">
    <property type="entry name" value="Methionyl-tRNA formyltransferase"/>
    <property type="match status" value="1"/>
</dbReference>
<dbReference type="FunFam" id="3.40.50.12230:FF:000001">
    <property type="entry name" value="Methionyl-tRNA formyltransferase"/>
    <property type="match status" value="1"/>
</dbReference>
<dbReference type="FunFam" id="3.40.50.170:FF:000003">
    <property type="entry name" value="Methionyl-tRNA formyltransferase"/>
    <property type="match status" value="1"/>
</dbReference>
<dbReference type="Gene3D" id="3.10.25.10">
    <property type="entry name" value="Formyl transferase, C-terminal domain"/>
    <property type="match status" value="1"/>
</dbReference>
<dbReference type="Gene3D" id="3.40.50.170">
    <property type="entry name" value="Formyl transferase, N-terminal domain"/>
    <property type="match status" value="1"/>
</dbReference>
<dbReference type="HAMAP" id="MF_00182">
    <property type="entry name" value="Formyl_trans"/>
    <property type="match status" value="1"/>
</dbReference>
<dbReference type="InterPro" id="IPR005794">
    <property type="entry name" value="Fmt"/>
</dbReference>
<dbReference type="InterPro" id="IPR005793">
    <property type="entry name" value="Formyl_trans_C"/>
</dbReference>
<dbReference type="InterPro" id="IPR037022">
    <property type="entry name" value="Formyl_trans_C_sf"/>
</dbReference>
<dbReference type="InterPro" id="IPR002376">
    <property type="entry name" value="Formyl_transf_N"/>
</dbReference>
<dbReference type="InterPro" id="IPR036477">
    <property type="entry name" value="Formyl_transf_N_sf"/>
</dbReference>
<dbReference type="InterPro" id="IPR011034">
    <property type="entry name" value="Formyl_transferase-like_C_sf"/>
</dbReference>
<dbReference type="InterPro" id="IPR001555">
    <property type="entry name" value="GART_AS"/>
</dbReference>
<dbReference type="InterPro" id="IPR044135">
    <property type="entry name" value="Met-tRNA-FMT_C"/>
</dbReference>
<dbReference type="InterPro" id="IPR041711">
    <property type="entry name" value="Met-tRNA-FMT_N"/>
</dbReference>
<dbReference type="NCBIfam" id="TIGR00460">
    <property type="entry name" value="fmt"/>
    <property type="match status" value="1"/>
</dbReference>
<dbReference type="PANTHER" id="PTHR11138">
    <property type="entry name" value="METHIONYL-TRNA FORMYLTRANSFERASE"/>
    <property type="match status" value="1"/>
</dbReference>
<dbReference type="PANTHER" id="PTHR11138:SF5">
    <property type="entry name" value="METHIONYL-TRNA FORMYLTRANSFERASE, MITOCHONDRIAL"/>
    <property type="match status" value="1"/>
</dbReference>
<dbReference type="Pfam" id="PF02911">
    <property type="entry name" value="Formyl_trans_C"/>
    <property type="match status" value="1"/>
</dbReference>
<dbReference type="Pfam" id="PF00551">
    <property type="entry name" value="Formyl_trans_N"/>
    <property type="match status" value="1"/>
</dbReference>
<dbReference type="SUPFAM" id="SSF50486">
    <property type="entry name" value="FMT C-terminal domain-like"/>
    <property type="match status" value="1"/>
</dbReference>
<dbReference type="SUPFAM" id="SSF53328">
    <property type="entry name" value="Formyltransferase"/>
    <property type="match status" value="1"/>
</dbReference>
<dbReference type="PROSITE" id="PS00373">
    <property type="entry name" value="GART"/>
    <property type="match status" value="1"/>
</dbReference>
<feature type="chain" id="PRO_1000118479" description="Methionyl-tRNA formyltransferase">
    <location>
        <begin position="1"/>
        <end position="315"/>
    </location>
</feature>
<feature type="binding site" evidence="1">
    <location>
        <begin position="113"/>
        <end position="116"/>
    </location>
    <ligand>
        <name>(6S)-5,6,7,8-tetrahydrofolate</name>
        <dbReference type="ChEBI" id="CHEBI:57453"/>
    </ligand>
</feature>
<comment type="function">
    <text evidence="1">Attaches a formyl group to the free amino group of methionyl-tRNA(fMet). The formyl group appears to play a dual role in the initiator identity of N-formylmethionyl-tRNA by promoting its recognition by IF2 and preventing the misappropriation of this tRNA by the elongation apparatus.</text>
</comment>
<comment type="catalytic activity">
    <reaction evidence="1">
        <text>L-methionyl-tRNA(fMet) + (6R)-10-formyltetrahydrofolate = N-formyl-L-methionyl-tRNA(fMet) + (6S)-5,6,7,8-tetrahydrofolate + H(+)</text>
        <dbReference type="Rhea" id="RHEA:24380"/>
        <dbReference type="Rhea" id="RHEA-COMP:9952"/>
        <dbReference type="Rhea" id="RHEA-COMP:9953"/>
        <dbReference type="ChEBI" id="CHEBI:15378"/>
        <dbReference type="ChEBI" id="CHEBI:57453"/>
        <dbReference type="ChEBI" id="CHEBI:78530"/>
        <dbReference type="ChEBI" id="CHEBI:78844"/>
        <dbReference type="ChEBI" id="CHEBI:195366"/>
        <dbReference type="EC" id="2.1.2.9"/>
    </reaction>
</comment>
<comment type="similarity">
    <text evidence="1">Belongs to the Fmt family.</text>
</comment>
<proteinExistence type="inferred from homology"/>
<evidence type="ECO:0000255" key="1">
    <source>
        <dbReference type="HAMAP-Rule" id="MF_00182"/>
    </source>
</evidence>
<organism>
    <name type="scientific">Escherichia coli O17:K52:H18 (strain UMN026 / ExPEC)</name>
    <dbReference type="NCBI Taxonomy" id="585056"/>
    <lineage>
        <taxon>Bacteria</taxon>
        <taxon>Pseudomonadati</taxon>
        <taxon>Pseudomonadota</taxon>
        <taxon>Gammaproteobacteria</taxon>
        <taxon>Enterobacterales</taxon>
        <taxon>Enterobacteriaceae</taxon>
        <taxon>Escherichia</taxon>
    </lineage>
</organism>
<sequence>MSESLRIIFAGTPDFAARHLDALLSSGHNVVGVFTQPDRPAGRGKKLMPSPVKVLAEEKALPVFQPVSLRPQENQQLVADLQADVMVVVAYGLILPKAVLEMPRLGCINVHGSLLPRWRGAAPIQRSLWAGDAETGVTIMQMDVGLDTGDMLYKLSCPITAEDTSGTLYDKLAELGPQGLITTLKQLADGTAKPEVQDETLVTYAEKLSKEEARIDWSLSAAQLERCIRAFNPWPMSWLEIEGQPVKVWKASVIDTATNAAPGTILEANKQGIQVATGDGILNLLSLQPAGKKAMSAQDLLNSRREWFVPGNRLV</sequence>
<protein>
    <recommendedName>
        <fullName evidence="1">Methionyl-tRNA formyltransferase</fullName>
        <ecNumber evidence="1">2.1.2.9</ecNumber>
    </recommendedName>
</protein>
<keyword id="KW-0648">Protein biosynthesis</keyword>
<keyword id="KW-0808">Transferase</keyword>
<name>FMT_ECOLU</name>
<reference key="1">
    <citation type="journal article" date="2009" name="PLoS Genet.">
        <title>Organised genome dynamics in the Escherichia coli species results in highly diverse adaptive paths.</title>
        <authorList>
            <person name="Touchon M."/>
            <person name="Hoede C."/>
            <person name="Tenaillon O."/>
            <person name="Barbe V."/>
            <person name="Baeriswyl S."/>
            <person name="Bidet P."/>
            <person name="Bingen E."/>
            <person name="Bonacorsi S."/>
            <person name="Bouchier C."/>
            <person name="Bouvet O."/>
            <person name="Calteau A."/>
            <person name="Chiapello H."/>
            <person name="Clermont O."/>
            <person name="Cruveiller S."/>
            <person name="Danchin A."/>
            <person name="Diard M."/>
            <person name="Dossat C."/>
            <person name="Karoui M.E."/>
            <person name="Frapy E."/>
            <person name="Garry L."/>
            <person name="Ghigo J.M."/>
            <person name="Gilles A.M."/>
            <person name="Johnson J."/>
            <person name="Le Bouguenec C."/>
            <person name="Lescat M."/>
            <person name="Mangenot S."/>
            <person name="Martinez-Jehanne V."/>
            <person name="Matic I."/>
            <person name="Nassif X."/>
            <person name="Oztas S."/>
            <person name="Petit M.A."/>
            <person name="Pichon C."/>
            <person name="Rouy Z."/>
            <person name="Ruf C.S."/>
            <person name="Schneider D."/>
            <person name="Tourret J."/>
            <person name="Vacherie B."/>
            <person name="Vallenet D."/>
            <person name="Medigue C."/>
            <person name="Rocha E.P.C."/>
            <person name="Denamur E."/>
        </authorList>
    </citation>
    <scope>NUCLEOTIDE SEQUENCE [LARGE SCALE GENOMIC DNA]</scope>
    <source>
        <strain>UMN026 / ExPEC</strain>
    </source>
</reference>
<accession>B7NDQ9</accession>
<gene>
    <name evidence="1" type="primary">fmt</name>
    <name type="ordered locus">ECUMN_3761</name>
</gene>